<keyword id="KW-1003">Cell membrane</keyword>
<keyword id="KW-0472">Membrane</keyword>
<keyword id="KW-1185">Reference proteome</keyword>
<keyword id="KW-0812">Transmembrane</keyword>
<keyword id="KW-1133">Transmembrane helix</keyword>
<gene>
    <name type="primary">ehaA</name>
    <name type="ordered locus">MK0477</name>
</gene>
<feature type="chain" id="PRO_0000138114" description="Probable [NiFe]-hydrogenase-type-3 Eha complex membrane subunit A">
    <location>
        <begin position="1"/>
        <end position="97"/>
    </location>
</feature>
<feature type="transmembrane region" description="Helical" evidence="2">
    <location>
        <begin position="5"/>
        <end position="25"/>
    </location>
</feature>
<feature type="transmembrane region" description="Helical" evidence="2">
    <location>
        <begin position="38"/>
        <end position="58"/>
    </location>
</feature>
<feature type="transmembrane region" description="Helical" evidence="2">
    <location>
        <begin position="67"/>
        <end position="87"/>
    </location>
</feature>
<proteinExistence type="inferred from homology"/>
<dbReference type="EMBL" id="AE009439">
    <property type="protein sequence ID" value="AAM01692.1"/>
    <property type="molecule type" value="Genomic_DNA"/>
</dbReference>
<dbReference type="RefSeq" id="WP_011018847.1">
    <property type="nucleotide sequence ID" value="NC_003551.1"/>
</dbReference>
<dbReference type="FunCoup" id="Q8TY29">
    <property type="interactions" value="3"/>
</dbReference>
<dbReference type="STRING" id="190192.MK0477"/>
<dbReference type="PaxDb" id="190192-MK0477"/>
<dbReference type="EnsemblBacteria" id="AAM01692">
    <property type="protein sequence ID" value="AAM01692"/>
    <property type="gene ID" value="MK0477"/>
</dbReference>
<dbReference type="GeneID" id="1477780"/>
<dbReference type="KEGG" id="mka:MK0477"/>
<dbReference type="HOGENOM" id="CLU_174516_0_0_2"/>
<dbReference type="InParanoid" id="Q8TY29"/>
<dbReference type="OrthoDB" id="81652at2157"/>
<dbReference type="Proteomes" id="UP000001826">
    <property type="component" value="Chromosome"/>
</dbReference>
<dbReference type="GO" id="GO:0005886">
    <property type="term" value="C:plasma membrane"/>
    <property type="evidence" value="ECO:0007669"/>
    <property type="project" value="UniProtKB-SubCell"/>
</dbReference>
<dbReference type="InterPro" id="IPR011306">
    <property type="entry name" value="Prd_NiFe_hyd_3_EhaA"/>
</dbReference>
<dbReference type="Pfam" id="PF17367">
    <property type="entry name" value="NiFe_hyd_3_EhaA"/>
    <property type="match status" value="1"/>
</dbReference>
<dbReference type="PIRSF" id="PIRSF005019">
    <property type="entry name" value="EhaA"/>
    <property type="match status" value="1"/>
</dbReference>
<reference key="1">
    <citation type="journal article" date="2002" name="Proc. Natl. Acad. Sci. U.S.A.">
        <title>The complete genome of hyperthermophile Methanopyrus kandleri AV19 and monophyly of archaeal methanogens.</title>
        <authorList>
            <person name="Slesarev A.I."/>
            <person name="Mezhevaya K.V."/>
            <person name="Makarova K.S."/>
            <person name="Polushin N.N."/>
            <person name="Shcherbinina O.V."/>
            <person name="Shakhova V.V."/>
            <person name="Belova G.I."/>
            <person name="Aravind L."/>
            <person name="Natale D.A."/>
            <person name="Rogozin I.B."/>
            <person name="Tatusov R.L."/>
            <person name="Wolf Y.I."/>
            <person name="Stetter K.O."/>
            <person name="Malykh A.G."/>
            <person name="Koonin E.V."/>
            <person name="Kozyavkin S.A."/>
        </authorList>
    </citation>
    <scope>NUCLEOTIDE SEQUENCE [LARGE SCALE GENOMIC DNA]</scope>
    <source>
        <strain>AV19 / DSM 6324 / JCM 9639 / NBRC 100938</strain>
    </source>
</reference>
<accession>Q8TY29</accession>
<protein>
    <recommendedName>
        <fullName>Probable [NiFe]-hydrogenase-type-3 Eha complex membrane subunit A</fullName>
    </recommendedName>
</protein>
<sequence>MKDPGLVAVGVAAAVAFGTALALGLPPIQRDKPRRKSWEVSAAFPTPVIAAGATVLVIRVIGYHPPIPLAIVGAVVGALSAAFTAYIEKVFPRPEAG</sequence>
<organism>
    <name type="scientific">Methanopyrus kandleri (strain AV19 / DSM 6324 / JCM 9639 / NBRC 100938)</name>
    <dbReference type="NCBI Taxonomy" id="190192"/>
    <lineage>
        <taxon>Archaea</taxon>
        <taxon>Methanobacteriati</taxon>
        <taxon>Methanobacteriota</taxon>
        <taxon>Methanomada group</taxon>
        <taxon>Methanopyri</taxon>
        <taxon>Methanopyrales</taxon>
        <taxon>Methanopyraceae</taxon>
        <taxon>Methanopyrus</taxon>
    </lineage>
</organism>
<evidence type="ECO:0000250" key="1"/>
<evidence type="ECO:0000255" key="2"/>
<evidence type="ECO:0000305" key="3"/>
<name>EHAA_METKA</name>
<comment type="function">
    <text evidence="1">One of the integral membrane subunits of multisubunit membrane-bound [NiFe]-hydrogenase eha. Eha is predicted to form large electron transfer complex and might catalyze energy-driven reduction of low-potential redox carriers (By similarity).</text>
</comment>
<comment type="subunit">
    <text evidence="1">Putative multisubunit membrane-bound [NiFe]-hydrogenase eha is composed of at least 20 subunits.</text>
</comment>
<comment type="subcellular location">
    <subcellularLocation>
        <location evidence="3">Cell membrane</location>
        <topology evidence="3">Multi-pass membrane protein</topology>
    </subcellularLocation>
</comment>
<comment type="similarity">
    <text evidence="3">Belongs to the EhaA family.</text>
</comment>